<name>DNAK_CLOBA</name>
<evidence type="ECO:0000255" key="1">
    <source>
        <dbReference type="HAMAP-Rule" id="MF_00332"/>
    </source>
</evidence>
<evidence type="ECO:0000256" key="2">
    <source>
        <dbReference type="SAM" id="MobiDB-lite"/>
    </source>
</evidence>
<sequence length="616" mass="65821">MGKIIGIDLGTTNSCVAVMEGGEPVVITNSEGARTTPSVVSFQADGERLVGQVAKRQSITNPDKTIISIKRHMGTSYKVDIDGKNYSPQEISAMVLQKIKADAESYLGESVTQAVITVPAYFNDSERQATKDAGKIAGLEVLRIINEPTAAALAYGLDKMDSNHKILVYDLGGGTFDVSILELGDGVFEVLSTNGDTKLGGDDFDQKVMDYIAETFKAENGIDLRQDKMALQRLKEAAEKAKIELSSSMQTNINLPFITADATGPKHIDLNLTRAKFNEITHDLVQRSIEPMKKALSDAAISIDEIEKIILVGGSTRIPAVVEAVKNFTGKDPSKGVNPDECVAVGAAVQAGVLTGEVKDVLLLDVTPLTLGIETAGGIATPLIERNTTIPTKKSQIFSTAADSQTSVEINVVQGERQMAMDNKSLGRFTLSGIAPAPRGIPQIEVTFDIDANGIVKVSALDKGTGKEANITITASTNLNDEEIDKAVKEAEKFAEEDKKRKEKVETLNNADQLIYQTEKALTELGDKVSAEDKAKVTEKLEALKAIKDGEDLEAIKKATEELTQEFYAVSSKVYAAAGGDPSQAGGFDPNAAGGAQQAPHDDNVVDADFKVDDDK</sequence>
<organism>
    <name type="scientific">Clostridium botulinum (strain Alaska E43 / Type E3)</name>
    <dbReference type="NCBI Taxonomy" id="508767"/>
    <lineage>
        <taxon>Bacteria</taxon>
        <taxon>Bacillati</taxon>
        <taxon>Bacillota</taxon>
        <taxon>Clostridia</taxon>
        <taxon>Eubacteriales</taxon>
        <taxon>Clostridiaceae</taxon>
        <taxon>Clostridium</taxon>
    </lineage>
</organism>
<protein>
    <recommendedName>
        <fullName evidence="1">Chaperone protein DnaK</fullName>
    </recommendedName>
    <alternativeName>
        <fullName evidence="1">HSP70</fullName>
    </alternativeName>
    <alternativeName>
        <fullName evidence="1">Heat shock 70 kDa protein</fullName>
    </alternativeName>
    <alternativeName>
        <fullName evidence="1">Heat shock protein 70</fullName>
    </alternativeName>
</protein>
<comment type="function">
    <text evidence="1">Acts as a chaperone.</text>
</comment>
<comment type="induction">
    <text evidence="1">By stress conditions e.g. heat shock.</text>
</comment>
<comment type="similarity">
    <text evidence="1">Belongs to the heat shock protein 70 family.</text>
</comment>
<keyword id="KW-0067">ATP-binding</keyword>
<keyword id="KW-0143">Chaperone</keyword>
<keyword id="KW-0547">Nucleotide-binding</keyword>
<keyword id="KW-0597">Phosphoprotein</keyword>
<keyword id="KW-0346">Stress response</keyword>
<gene>
    <name evidence="1" type="primary">dnaK</name>
    <name type="ordered locus">CLH_0858</name>
</gene>
<proteinExistence type="inferred from homology"/>
<reference key="1">
    <citation type="submission" date="2008-05" db="EMBL/GenBank/DDBJ databases">
        <title>Complete genome sequence of Clostridium botulinum E3 str. Alaska E43.</title>
        <authorList>
            <person name="Brinkac L.M."/>
            <person name="Brown J.L."/>
            <person name="Bruce D."/>
            <person name="Detter C."/>
            <person name="Munk C."/>
            <person name="Smith L.A."/>
            <person name="Smith T.J."/>
            <person name="Sutton G."/>
            <person name="Brettin T.S."/>
        </authorList>
    </citation>
    <scope>NUCLEOTIDE SEQUENCE [LARGE SCALE GENOMIC DNA]</scope>
    <source>
        <strain>Alaska E43 / Type E3</strain>
    </source>
</reference>
<accession>B2V2I5</accession>
<feature type="chain" id="PRO_1000119688" description="Chaperone protein DnaK">
    <location>
        <begin position="1"/>
        <end position="616"/>
    </location>
</feature>
<feature type="region of interest" description="Disordered" evidence="2">
    <location>
        <begin position="579"/>
        <end position="605"/>
    </location>
</feature>
<feature type="modified residue" description="Phosphothreonine; by autocatalysis" evidence="1">
    <location>
        <position position="175"/>
    </location>
</feature>
<dbReference type="EMBL" id="CP001078">
    <property type="protein sequence ID" value="ACD51747.1"/>
    <property type="molecule type" value="Genomic_DNA"/>
</dbReference>
<dbReference type="RefSeq" id="WP_003369488.1">
    <property type="nucleotide sequence ID" value="NC_010723.1"/>
</dbReference>
<dbReference type="SMR" id="B2V2I5"/>
<dbReference type="KEGG" id="cbt:CLH_0858"/>
<dbReference type="HOGENOM" id="CLU_005965_2_1_9"/>
<dbReference type="GO" id="GO:0005524">
    <property type="term" value="F:ATP binding"/>
    <property type="evidence" value="ECO:0007669"/>
    <property type="project" value="UniProtKB-UniRule"/>
</dbReference>
<dbReference type="GO" id="GO:0140662">
    <property type="term" value="F:ATP-dependent protein folding chaperone"/>
    <property type="evidence" value="ECO:0007669"/>
    <property type="project" value="InterPro"/>
</dbReference>
<dbReference type="GO" id="GO:0051082">
    <property type="term" value="F:unfolded protein binding"/>
    <property type="evidence" value="ECO:0007669"/>
    <property type="project" value="InterPro"/>
</dbReference>
<dbReference type="CDD" id="cd10234">
    <property type="entry name" value="ASKHA_NBD_HSP70_DnaK-like"/>
    <property type="match status" value="1"/>
</dbReference>
<dbReference type="FunFam" id="2.60.34.10:FF:000014">
    <property type="entry name" value="Chaperone protein DnaK HSP70"/>
    <property type="match status" value="1"/>
</dbReference>
<dbReference type="FunFam" id="1.20.1270.10:FF:000001">
    <property type="entry name" value="Molecular chaperone DnaK"/>
    <property type="match status" value="1"/>
</dbReference>
<dbReference type="FunFam" id="3.30.420.40:FF:000071">
    <property type="entry name" value="Molecular chaperone DnaK"/>
    <property type="match status" value="1"/>
</dbReference>
<dbReference type="FunFam" id="3.90.640.10:FF:000003">
    <property type="entry name" value="Molecular chaperone DnaK"/>
    <property type="match status" value="1"/>
</dbReference>
<dbReference type="Gene3D" id="1.20.1270.10">
    <property type="match status" value="1"/>
</dbReference>
<dbReference type="Gene3D" id="3.30.420.40">
    <property type="match status" value="2"/>
</dbReference>
<dbReference type="Gene3D" id="3.90.640.10">
    <property type="entry name" value="Actin, Chain A, domain 4"/>
    <property type="match status" value="1"/>
</dbReference>
<dbReference type="Gene3D" id="2.60.34.10">
    <property type="entry name" value="Substrate Binding Domain Of DNAk, Chain A, domain 1"/>
    <property type="match status" value="1"/>
</dbReference>
<dbReference type="HAMAP" id="MF_00332">
    <property type="entry name" value="DnaK"/>
    <property type="match status" value="1"/>
</dbReference>
<dbReference type="InterPro" id="IPR043129">
    <property type="entry name" value="ATPase_NBD"/>
</dbReference>
<dbReference type="InterPro" id="IPR012725">
    <property type="entry name" value="Chaperone_DnaK"/>
</dbReference>
<dbReference type="InterPro" id="IPR018181">
    <property type="entry name" value="Heat_shock_70_CS"/>
</dbReference>
<dbReference type="InterPro" id="IPR029048">
    <property type="entry name" value="HSP70_C_sf"/>
</dbReference>
<dbReference type="InterPro" id="IPR029047">
    <property type="entry name" value="HSP70_peptide-bd_sf"/>
</dbReference>
<dbReference type="InterPro" id="IPR013126">
    <property type="entry name" value="Hsp_70_fam"/>
</dbReference>
<dbReference type="NCBIfam" id="NF001413">
    <property type="entry name" value="PRK00290.1"/>
    <property type="match status" value="1"/>
</dbReference>
<dbReference type="NCBIfam" id="TIGR02350">
    <property type="entry name" value="prok_dnaK"/>
    <property type="match status" value="1"/>
</dbReference>
<dbReference type="PANTHER" id="PTHR19375">
    <property type="entry name" value="HEAT SHOCK PROTEIN 70KDA"/>
    <property type="match status" value="1"/>
</dbReference>
<dbReference type="Pfam" id="PF00012">
    <property type="entry name" value="HSP70"/>
    <property type="match status" value="1"/>
</dbReference>
<dbReference type="PRINTS" id="PR00301">
    <property type="entry name" value="HEATSHOCK70"/>
</dbReference>
<dbReference type="SUPFAM" id="SSF53067">
    <property type="entry name" value="Actin-like ATPase domain"/>
    <property type="match status" value="2"/>
</dbReference>
<dbReference type="SUPFAM" id="SSF100934">
    <property type="entry name" value="Heat shock protein 70kD (HSP70), C-terminal subdomain"/>
    <property type="match status" value="1"/>
</dbReference>
<dbReference type="SUPFAM" id="SSF100920">
    <property type="entry name" value="Heat shock protein 70kD (HSP70), peptide-binding domain"/>
    <property type="match status" value="1"/>
</dbReference>
<dbReference type="PROSITE" id="PS00297">
    <property type="entry name" value="HSP70_1"/>
    <property type="match status" value="1"/>
</dbReference>
<dbReference type="PROSITE" id="PS00329">
    <property type="entry name" value="HSP70_2"/>
    <property type="match status" value="1"/>
</dbReference>
<dbReference type="PROSITE" id="PS01036">
    <property type="entry name" value="HSP70_3"/>
    <property type="match status" value="1"/>
</dbReference>